<protein>
    <recommendedName>
        <fullName evidence="1">ATP-dependent Clp protease adapter protein ClpS</fullName>
    </recommendedName>
</protein>
<sequence>MATKFQEGGQLEAQRSRLGPPKMYKVVLLNDDYTPMDFVITVLQRFFSLDTEQATRIMLKVHNEGRGVCGVFPRDIAATKVEQVSAFARQHQHPLACIMEEN</sequence>
<reference key="1">
    <citation type="journal article" date="2009" name="BMC Genomics">
        <title>Metabolic analysis of the soil microbe Dechloromonas aromatica str. RCB: indications of a surprisingly complex life-style and cryptic anaerobic pathways for aromatic degradation.</title>
        <authorList>
            <person name="Salinero K.K."/>
            <person name="Keller K."/>
            <person name="Feil W.S."/>
            <person name="Feil H."/>
            <person name="Trong S."/>
            <person name="Di Bartolo G."/>
            <person name="Lapidus A."/>
        </authorList>
    </citation>
    <scope>NUCLEOTIDE SEQUENCE [LARGE SCALE GENOMIC DNA]</scope>
    <source>
        <strain>RCB</strain>
    </source>
</reference>
<name>CLPS_DECAR</name>
<accession>Q47BF7</accession>
<evidence type="ECO:0000255" key="1">
    <source>
        <dbReference type="HAMAP-Rule" id="MF_00302"/>
    </source>
</evidence>
<proteinExistence type="inferred from homology"/>
<dbReference type="EMBL" id="CP000089">
    <property type="protein sequence ID" value="AAZ47824.1"/>
    <property type="molecule type" value="Genomic_DNA"/>
</dbReference>
<dbReference type="SMR" id="Q47BF7"/>
<dbReference type="STRING" id="159087.Daro_3094"/>
<dbReference type="KEGG" id="dar:Daro_3094"/>
<dbReference type="eggNOG" id="COG2127">
    <property type="taxonomic scope" value="Bacteria"/>
</dbReference>
<dbReference type="HOGENOM" id="CLU_134358_2_1_4"/>
<dbReference type="OrthoDB" id="9796121at2"/>
<dbReference type="GO" id="GO:0030163">
    <property type="term" value="P:protein catabolic process"/>
    <property type="evidence" value="ECO:0007669"/>
    <property type="project" value="InterPro"/>
</dbReference>
<dbReference type="GO" id="GO:0006508">
    <property type="term" value="P:proteolysis"/>
    <property type="evidence" value="ECO:0007669"/>
    <property type="project" value="UniProtKB-UniRule"/>
</dbReference>
<dbReference type="FunFam" id="3.30.1390.10:FF:000002">
    <property type="entry name" value="ATP-dependent Clp protease adapter protein ClpS"/>
    <property type="match status" value="1"/>
</dbReference>
<dbReference type="Gene3D" id="3.30.1390.10">
    <property type="match status" value="1"/>
</dbReference>
<dbReference type="HAMAP" id="MF_00302">
    <property type="entry name" value="ClpS"/>
    <property type="match status" value="1"/>
</dbReference>
<dbReference type="InterPro" id="IPR022935">
    <property type="entry name" value="ClpS"/>
</dbReference>
<dbReference type="InterPro" id="IPR003769">
    <property type="entry name" value="ClpS_core"/>
</dbReference>
<dbReference type="InterPro" id="IPR014719">
    <property type="entry name" value="Ribosomal_bL12_C/ClpS-like"/>
</dbReference>
<dbReference type="NCBIfam" id="NF000672">
    <property type="entry name" value="PRK00033.1-5"/>
    <property type="match status" value="1"/>
</dbReference>
<dbReference type="PANTHER" id="PTHR33473:SF19">
    <property type="entry name" value="ATP-DEPENDENT CLP PROTEASE ADAPTER PROTEIN CLPS"/>
    <property type="match status" value="1"/>
</dbReference>
<dbReference type="PANTHER" id="PTHR33473">
    <property type="entry name" value="ATP-DEPENDENT CLP PROTEASE ADAPTER PROTEIN CLPS1, CHLOROPLASTIC"/>
    <property type="match status" value="1"/>
</dbReference>
<dbReference type="Pfam" id="PF02617">
    <property type="entry name" value="ClpS"/>
    <property type="match status" value="1"/>
</dbReference>
<dbReference type="SUPFAM" id="SSF54736">
    <property type="entry name" value="ClpS-like"/>
    <property type="match status" value="1"/>
</dbReference>
<feature type="chain" id="PRO_1000022606" description="ATP-dependent Clp protease adapter protein ClpS">
    <location>
        <begin position="1"/>
        <end position="102"/>
    </location>
</feature>
<organism>
    <name type="scientific">Dechloromonas aromatica (strain RCB)</name>
    <dbReference type="NCBI Taxonomy" id="159087"/>
    <lineage>
        <taxon>Bacteria</taxon>
        <taxon>Pseudomonadati</taxon>
        <taxon>Pseudomonadota</taxon>
        <taxon>Betaproteobacteria</taxon>
        <taxon>Rhodocyclales</taxon>
        <taxon>Azonexaceae</taxon>
        <taxon>Dechloromonas</taxon>
    </lineage>
</organism>
<gene>
    <name evidence="1" type="primary">clpS</name>
    <name type="ordered locus">Daro_3094</name>
</gene>
<comment type="function">
    <text evidence="1">Involved in the modulation of the specificity of the ClpAP-mediated ATP-dependent protein degradation.</text>
</comment>
<comment type="subunit">
    <text evidence="1">Binds to the N-terminal domain of the chaperone ClpA.</text>
</comment>
<comment type="similarity">
    <text evidence="1">Belongs to the ClpS family.</text>
</comment>